<protein>
    <recommendedName>
        <fullName evidence="1">ATP synthase subunit beta, chloroplastic</fullName>
        <ecNumber evidence="1">7.1.2.2</ecNumber>
    </recommendedName>
    <alternativeName>
        <fullName evidence="1">ATP synthase F1 sector subunit beta</fullName>
    </alternativeName>
    <alternativeName>
        <fullName evidence="1">F-ATPase subunit beta</fullName>
    </alternativeName>
</protein>
<comment type="function">
    <text evidence="1">Produces ATP from ADP in the presence of a proton gradient across the membrane. The catalytic sites are hosted primarily by the beta subunits.</text>
</comment>
<comment type="catalytic activity">
    <reaction evidence="1">
        <text>ATP + H2O + 4 H(+)(in) = ADP + phosphate + 5 H(+)(out)</text>
        <dbReference type="Rhea" id="RHEA:57720"/>
        <dbReference type="ChEBI" id="CHEBI:15377"/>
        <dbReference type="ChEBI" id="CHEBI:15378"/>
        <dbReference type="ChEBI" id="CHEBI:30616"/>
        <dbReference type="ChEBI" id="CHEBI:43474"/>
        <dbReference type="ChEBI" id="CHEBI:456216"/>
        <dbReference type="EC" id="7.1.2.2"/>
    </reaction>
</comment>
<comment type="subunit">
    <text evidence="1">F-type ATPases have 2 components, CF(1) - the catalytic core - and CF(0) - the membrane proton channel. CF(1) has five subunits: alpha(3), beta(3), gamma(1), delta(1), epsilon(1). CF(0) has four main subunits: a(1), b(1), b'(1) and c(9-12).</text>
</comment>
<comment type="subcellular location">
    <subcellularLocation>
        <location evidence="1">Plastid</location>
        <location evidence="1">Chloroplast thylakoid membrane</location>
        <topology evidence="1">Peripheral membrane protein</topology>
    </subcellularLocation>
</comment>
<comment type="similarity">
    <text evidence="1">Belongs to the ATPase alpha/beta chains family.</text>
</comment>
<dbReference type="EC" id="7.1.2.2" evidence="1"/>
<dbReference type="EMBL" id="AY100852">
    <property type="protein sequence ID" value="AAM52206.1"/>
    <property type="molecule type" value="Genomic_DNA"/>
</dbReference>
<dbReference type="SMR" id="Q8MBF7"/>
<dbReference type="GO" id="GO:0009535">
    <property type="term" value="C:chloroplast thylakoid membrane"/>
    <property type="evidence" value="ECO:0007669"/>
    <property type="project" value="UniProtKB-SubCell"/>
</dbReference>
<dbReference type="GO" id="GO:0005739">
    <property type="term" value="C:mitochondrion"/>
    <property type="evidence" value="ECO:0007669"/>
    <property type="project" value="GOC"/>
</dbReference>
<dbReference type="GO" id="GO:0045259">
    <property type="term" value="C:proton-transporting ATP synthase complex"/>
    <property type="evidence" value="ECO:0007669"/>
    <property type="project" value="UniProtKB-KW"/>
</dbReference>
<dbReference type="GO" id="GO:0005524">
    <property type="term" value="F:ATP binding"/>
    <property type="evidence" value="ECO:0007669"/>
    <property type="project" value="UniProtKB-UniRule"/>
</dbReference>
<dbReference type="GO" id="GO:0016887">
    <property type="term" value="F:ATP hydrolysis activity"/>
    <property type="evidence" value="ECO:0007669"/>
    <property type="project" value="InterPro"/>
</dbReference>
<dbReference type="GO" id="GO:0046933">
    <property type="term" value="F:proton-transporting ATP synthase activity, rotational mechanism"/>
    <property type="evidence" value="ECO:0007669"/>
    <property type="project" value="UniProtKB-UniRule"/>
</dbReference>
<dbReference type="GO" id="GO:0042776">
    <property type="term" value="P:proton motive force-driven mitochondrial ATP synthesis"/>
    <property type="evidence" value="ECO:0007669"/>
    <property type="project" value="TreeGrafter"/>
</dbReference>
<dbReference type="CDD" id="cd18110">
    <property type="entry name" value="ATP-synt_F1_beta_C"/>
    <property type="match status" value="1"/>
</dbReference>
<dbReference type="CDD" id="cd18115">
    <property type="entry name" value="ATP-synt_F1_beta_N"/>
    <property type="match status" value="1"/>
</dbReference>
<dbReference type="CDD" id="cd01133">
    <property type="entry name" value="F1-ATPase_beta_CD"/>
    <property type="match status" value="1"/>
</dbReference>
<dbReference type="FunFam" id="1.10.1140.10:FF:000001">
    <property type="entry name" value="ATP synthase subunit beta"/>
    <property type="match status" value="1"/>
</dbReference>
<dbReference type="FunFam" id="3.40.50.12240:FF:000006">
    <property type="entry name" value="ATP synthase subunit beta"/>
    <property type="match status" value="1"/>
</dbReference>
<dbReference type="FunFam" id="3.40.50.300:FF:000004">
    <property type="entry name" value="ATP synthase subunit beta"/>
    <property type="match status" value="1"/>
</dbReference>
<dbReference type="FunFam" id="2.40.10.170:FF:000002">
    <property type="entry name" value="ATP synthase subunit beta, chloroplastic"/>
    <property type="match status" value="1"/>
</dbReference>
<dbReference type="Gene3D" id="2.40.10.170">
    <property type="match status" value="1"/>
</dbReference>
<dbReference type="Gene3D" id="1.10.1140.10">
    <property type="entry name" value="Bovine Mitochondrial F1-atpase, Atp Synthase Beta Chain, Chain D, domain 3"/>
    <property type="match status" value="1"/>
</dbReference>
<dbReference type="Gene3D" id="3.40.50.300">
    <property type="entry name" value="P-loop containing nucleotide triphosphate hydrolases"/>
    <property type="match status" value="1"/>
</dbReference>
<dbReference type="HAMAP" id="MF_01347">
    <property type="entry name" value="ATP_synth_beta_bact"/>
    <property type="match status" value="1"/>
</dbReference>
<dbReference type="InterPro" id="IPR003593">
    <property type="entry name" value="AAA+_ATPase"/>
</dbReference>
<dbReference type="InterPro" id="IPR055190">
    <property type="entry name" value="ATP-synt_VA_C"/>
</dbReference>
<dbReference type="InterPro" id="IPR005722">
    <property type="entry name" value="ATP_synth_F1_bsu"/>
</dbReference>
<dbReference type="InterPro" id="IPR020003">
    <property type="entry name" value="ATPase_a/bsu_AS"/>
</dbReference>
<dbReference type="InterPro" id="IPR050053">
    <property type="entry name" value="ATPase_alpha/beta_chains"/>
</dbReference>
<dbReference type="InterPro" id="IPR004100">
    <property type="entry name" value="ATPase_F1/V1/A1_a/bsu_N"/>
</dbReference>
<dbReference type="InterPro" id="IPR036121">
    <property type="entry name" value="ATPase_F1/V1/A1_a/bsu_N_sf"/>
</dbReference>
<dbReference type="InterPro" id="IPR000194">
    <property type="entry name" value="ATPase_F1/V1/A1_a/bsu_nucl-bd"/>
</dbReference>
<dbReference type="InterPro" id="IPR024034">
    <property type="entry name" value="ATPase_F1/V1_b/a_C"/>
</dbReference>
<dbReference type="InterPro" id="IPR027417">
    <property type="entry name" value="P-loop_NTPase"/>
</dbReference>
<dbReference type="NCBIfam" id="TIGR01039">
    <property type="entry name" value="atpD"/>
    <property type="match status" value="1"/>
</dbReference>
<dbReference type="PANTHER" id="PTHR15184">
    <property type="entry name" value="ATP SYNTHASE"/>
    <property type="match status" value="1"/>
</dbReference>
<dbReference type="PANTHER" id="PTHR15184:SF71">
    <property type="entry name" value="ATP SYNTHASE SUBUNIT BETA, MITOCHONDRIAL"/>
    <property type="match status" value="1"/>
</dbReference>
<dbReference type="Pfam" id="PF00006">
    <property type="entry name" value="ATP-synt_ab"/>
    <property type="match status" value="1"/>
</dbReference>
<dbReference type="Pfam" id="PF02874">
    <property type="entry name" value="ATP-synt_ab_N"/>
    <property type="match status" value="1"/>
</dbReference>
<dbReference type="Pfam" id="PF22919">
    <property type="entry name" value="ATP-synt_VA_C"/>
    <property type="match status" value="1"/>
</dbReference>
<dbReference type="SMART" id="SM00382">
    <property type="entry name" value="AAA"/>
    <property type="match status" value="1"/>
</dbReference>
<dbReference type="SUPFAM" id="SSF47917">
    <property type="entry name" value="C-terminal domain of alpha and beta subunits of F1 ATP synthase"/>
    <property type="match status" value="1"/>
</dbReference>
<dbReference type="SUPFAM" id="SSF50615">
    <property type="entry name" value="N-terminal domain of alpha and beta subunits of F1 ATP synthase"/>
    <property type="match status" value="1"/>
</dbReference>
<dbReference type="SUPFAM" id="SSF52540">
    <property type="entry name" value="P-loop containing nucleoside triphosphate hydrolases"/>
    <property type="match status" value="1"/>
</dbReference>
<dbReference type="PROSITE" id="PS00152">
    <property type="entry name" value="ATPASE_ALPHA_BETA"/>
    <property type="match status" value="1"/>
</dbReference>
<accession>Q8MBF7</accession>
<organism>
    <name type="scientific">Montinia caryophyllacea</name>
    <name type="common">Wild clove bush</name>
    <dbReference type="NCBI Taxonomy" id="23084"/>
    <lineage>
        <taxon>Eukaryota</taxon>
        <taxon>Viridiplantae</taxon>
        <taxon>Streptophyta</taxon>
        <taxon>Embryophyta</taxon>
        <taxon>Tracheophyta</taxon>
        <taxon>Spermatophyta</taxon>
        <taxon>Magnoliopsida</taxon>
        <taxon>eudicotyledons</taxon>
        <taxon>Gunneridae</taxon>
        <taxon>Pentapetalae</taxon>
        <taxon>asterids</taxon>
        <taxon>lamiids</taxon>
        <taxon>Solanales</taxon>
        <taxon>Montiniaceae</taxon>
        <taxon>Montinia</taxon>
    </lineage>
</organism>
<evidence type="ECO:0000255" key="1">
    <source>
        <dbReference type="HAMAP-Rule" id="MF_01347"/>
    </source>
</evidence>
<keyword id="KW-0066">ATP synthesis</keyword>
<keyword id="KW-0067">ATP-binding</keyword>
<keyword id="KW-0139">CF(1)</keyword>
<keyword id="KW-0150">Chloroplast</keyword>
<keyword id="KW-0375">Hydrogen ion transport</keyword>
<keyword id="KW-0406">Ion transport</keyword>
<keyword id="KW-0472">Membrane</keyword>
<keyword id="KW-0547">Nucleotide-binding</keyword>
<keyword id="KW-0934">Plastid</keyword>
<keyword id="KW-0793">Thylakoid</keyword>
<keyword id="KW-1278">Translocase</keyword>
<keyword id="KW-0813">Transport</keyword>
<geneLocation type="chloroplast"/>
<proteinExistence type="inferred from homology"/>
<gene>
    <name evidence="1" type="primary">atpB</name>
</gene>
<name>ATPB_MONCA</name>
<sequence>MRINPTTSGSGVSTLEKQTLGRIVQIIGPVLDVAFPPGKMPNIYNALVVKGRDSAGQPINVTCEVQQLLGNNRVRAVAMSATDGLTRGMEVIDMGAAISVPVGGATLGRIFNVLGEPVDNLGPVDTSTTSPIHRSAPAFIQLDTKLAIFETGIKVVDLLAPYRRGGKIGLFGGAGVGKTVLIMELINNIAKAHGGVSVFGGVGERTREGNDLYMEMKESGVINEENIAESKVALVYGQMNEPPGARMRVGLTALTMAEYFRDVNEQDVLLFIDNIFRFVQAGSEVSALLGRMPSAVGYQPTLSTEMGSLQERITSTKEGSITSIQAVYVPADDLTDPAPATTFAHLDATTVLSRGLAAKGIYPAVDPLDSTSTMLQPRIVGEEHYETAQRVKETLQRYKELQDIIAILGLDELSEEDRLTVARARKIERFLSQPFFVAEVFTGSPGKYVGLAETIRGFQLILSGELDSFPEQAFYLVGNIDEATAKAMNLEMESNLKK</sequence>
<reference key="1">
    <citation type="journal article" date="2002" name="Am. J. Bot.">
        <title>Monophyly of the Convolvulaceae and circumscription of their major lineages based on DNA sequences of multiple chloroplast loci.</title>
        <authorList>
            <person name="Stefanovic S."/>
            <person name="Krueger L."/>
            <person name="Olmstead R.G."/>
        </authorList>
        <dbReference type="AGRICOLA" id="IND23320510"/>
    </citation>
    <scope>NUCLEOTIDE SEQUENCE [GENOMIC DNA]</scope>
</reference>
<feature type="chain" id="PRO_0000144528" description="ATP synthase subunit beta, chloroplastic">
    <location>
        <begin position="1"/>
        <end position="498"/>
    </location>
</feature>
<feature type="binding site" evidence="1">
    <location>
        <begin position="172"/>
        <end position="179"/>
    </location>
    <ligand>
        <name>ATP</name>
        <dbReference type="ChEBI" id="CHEBI:30616"/>
    </ligand>
</feature>